<sequence length="405" mass="44922">MNHLPMPTFGPLAGVRVVFSGIEIAAPFAGQMFAEWGAEVIWIENVAWADTIRVQPNYPQLSRRNLHALSLNIFKDEGREAFLKLMETTDIFIEASKGPAFARRGITDEVLWEHNPKLVIAHLSGFGQYGTEEYTNLPAYNTIAQAFSGYLIQNGDVDQPMPPFPYTADYFSGMTATTAALAALHKVRETGKGESIDIAMYEVMLRMGQYFMMDYFNGGEICPRMTKGKDPYYAGCGLYKCADGYIVMELVGITQINECFKDIGLAHILGTPEAPEGTQLIHRVECPYGPLVEEKLDAWLATHTIAEVQARFAELNIACAKVLTIPELEGNPQYVARESITQWQTMDGRTCKGPNIMPKFKNNPGKIWRGMPSHGMDTAAILKNIGYSEADIKELVGKGLAKVED</sequence>
<proteinExistence type="inferred from homology"/>
<organism>
    <name type="scientific">Salmonella gallinarum (strain 287/91 / NCTC 13346)</name>
    <dbReference type="NCBI Taxonomy" id="550538"/>
    <lineage>
        <taxon>Bacteria</taxon>
        <taxon>Pseudomonadati</taxon>
        <taxon>Pseudomonadota</taxon>
        <taxon>Gammaproteobacteria</taxon>
        <taxon>Enterobacterales</taxon>
        <taxon>Enterobacteriaceae</taxon>
        <taxon>Salmonella</taxon>
    </lineage>
</organism>
<dbReference type="EC" id="2.8.3.21" evidence="1"/>
<dbReference type="EMBL" id="AM933173">
    <property type="protein sequence ID" value="CAR35982.1"/>
    <property type="molecule type" value="Genomic_DNA"/>
</dbReference>
<dbReference type="RefSeq" id="WP_001016205.1">
    <property type="nucleotide sequence ID" value="NC_011274.1"/>
</dbReference>
<dbReference type="SMR" id="B5RGA5"/>
<dbReference type="KEGG" id="seg:SG0075"/>
<dbReference type="HOGENOM" id="CLU_033975_2_0_6"/>
<dbReference type="UniPathway" id="UPA00117"/>
<dbReference type="Proteomes" id="UP000008321">
    <property type="component" value="Chromosome"/>
</dbReference>
<dbReference type="GO" id="GO:0005737">
    <property type="term" value="C:cytoplasm"/>
    <property type="evidence" value="ECO:0007669"/>
    <property type="project" value="UniProtKB-SubCell"/>
</dbReference>
<dbReference type="GO" id="GO:0008735">
    <property type="term" value="F:L-carnitine CoA-transferase activity"/>
    <property type="evidence" value="ECO:0007669"/>
    <property type="project" value="RHEA"/>
</dbReference>
<dbReference type="GO" id="GO:0009437">
    <property type="term" value="P:carnitine metabolic process"/>
    <property type="evidence" value="ECO:0007669"/>
    <property type="project" value="UniProtKB-UniRule"/>
</dbReference>
<dbReference type="FunFam" id="3.30.1540.10:FF:000001">
    <property type="entry name" value="L-carnitine CoA-transferase"/>
    <property type="match status" value="1"/>
</dbReference>
<dbReference type="Gene3D" id="3.40.50.10540">
    <property type="entry name" value="Crotonobetainyl-coa:carnitine coa-transferase, domain 1"/>
    <property type="match status" value="1"/>
</dbReference>
<dbReference type="Gene3D" id="3.30.1540.10">
    <property type="entry name" value="formyl-coa transferase, domain 3"/>
    <property type="match status" value="1"/>
</dbReference>
<dbReference type="HAMAP" id="MF_01050">
    <property type="entry name" value="CaiB"/>
    <property type="match status" value="1"/>
</dbReference>
<dbReference type="InterPro" id="IPR050509">
    <property type="entry name" value="CoA-transferase_III"/>
</dbReference>
<dbReference type="InterPro" id="IPR023452">
    <property type="entry name" value="CoA-Trfase_CaiB"/>
</dbReference>
<dbReference type="InterPro" id="IPR003673">
    <property type="entry name" value="CoA-Trfase_fam_III"/>
</dbReference>
<dbReference type="InterPro" id="IPR044855">
    <property type="entry name" value="CoA-Trfase_III_dom3_sf"/>
</dbReference>
<dbReference type="InterPro" id="IPR023606">
    <property type="entry name" value="CoA-Trfase_III_dom_1_sf"/>
</dbReference>
<dbReference type="NCBIfam" id="NF002914">
    <property type="entry name" value="PRK03525.1"/>
    <property type="match status" value="1"/>
</dbReference>
<dbReference type="PANTHER" id="PTHR48228:SF6">
    <property type="entry name" value="L-CARNITINE COA-TRANSFERASE"/>
    <property type="match status" value="1"/>
</dbReference>
<dbReference type="PANTHER" id="PTHR48228">
    <property type="entry name" value="SUCCINYL-COA--D-CITRAMALATE COA-TRANSFERASE"/>
    <property type="match status" value="1"/>
</dbReference>
<dbReference type="Pfam" id="PF02515">
    <property type="entry name" value="CoA_transf_3"/>
    <property type="match status" value="1"/>
</dbReference>
<dbReference type="SUPFAM" id="SSF89796">
    <property type="entry name" value="CoA-transferase family III (CaiB/BaiF)"/>
    <property type="match status" value="1"/>
</dbReference>
<gene>
    <name evidence="1" type="primary">caiB</name>
    <name type="ordered locus">SG0075</name>
</gene>
<accession>B5RGA5</accession>
<evidence type="ECO:0000255" key="1">
    <source>
        <dbReference type="HAMAP-Rule" id="MF_01050"/>
    </source>
</evidence>
<comment type="function">
    <text evidence="1">Catalyzes the reversible transfer of the CoA moiety from gamma-butyrobetainyl-CoA to L-carnitine to generate L-carnitinyl-CoA and gamma-butyrobetaine. Is also able to catalyze the reversible transfer of the CoA moiety from gamma-butyrobetainyl-CoA or L-carnitinyl-CoA to crotonobetaine to generate crotonobetainyl-CoA.</text>
</comment>
<comment type="catalytic activity">
    <reaction evidence="1">
        <text>crotonobetainyl-CoA + (R)-carnitine = crotonobetaine + (R)-carnitinyl-CoA</text>
        <dbReference type="Rhea" id="RHEA:28526"/>
        <dbReference type="ChEBI" id="CHEBI:16347"/>
        <dbReference type="ChEBI" id="CHEBI:17237"/>
        <dbReference type="ChEBI" id="CHEBI:60932"/>
        <dbReference type="ChEBI" id="CHEBI:60933"/>
        <dbReference type="EC" id="2.8.3.21"/>
    </reaction>
</comment>
<comment type="catalytic activity">
    <reaction evidence="1">
        <text>4-(trimethylamino)butanoyl-CoA + (R)-carnitine = (R)-carnitinyl-CoA + 4-(trimethylamino)butanoate</text>
        <dbReference type="Rhea" id="RHEA:28418"/>
        <dbReference type="ChEBI" id="CHEBI:16244"/>
        <dbReference type="ChEBI" id="CHEBI:16347"/>
        <dbReference type="ChEBI" id="CHEBI:60932"/>
        <dbReference type="ChEBI" id="CHEBI:61513"/>
        <dbReference type="EC" id="2.8.3.21"/>
    </reaction>
</comment>
<comment type="pathway">
    <text evidence="1">Amine and polyamine metabolism; carnitine metabolism.</text>
</comment>
<comment type="subunit">
    <text evidence="1">Homodimer.</text>
</comment>
<comment type="subcellular location">
    <subcellularLocation>
        <location evidence="1">Cytoplasm</location>
    </subcellularLocation>
</comment>
<comment type="similarity">
    <text evidence="1">Belongs to the CoA-transferase III family. CaiB subfamily.</text>
</comment>
<reference key="1">
    <citation type="journal article" date="2008" name="Genome Res.">
        <title>Comparative genome analysis of Salmonella enteritidis PT4 and Salmonella gallinarum 287/91 provides insights into evolutionary and host adaptation pathways.</title>
        <authorList>
            <person name="Thomson N.R."/>
            <person name="Clayton D.J."/>
            <person name="Windhorst D."/>
            <person name="Vernikos G."/>
            <person name="Davidson S."/>
            <person name="Churcher C."/>
            <person name="Quail M.A."/>
            <person name="Stevens M."/>
            <person name="Jones M.A."/>
            <person name="Watson M."/>
            <person name="Barron A."/>
            <person name="Layton A."/>
            <person name="Pickard D."/>
            <person name="Kingsley R.A."/>
            <person name="Bignell A."/>
            <person name="Clark L."/>
            <person name="Harris B."/>
            <person name="Ormond D."/>
            <person name="Abdellah Z."/>
            <person name="Brooks K."/>
            <person name="Cherevach I."/>
            <person name="Chillingworth T."/>
            <person name="Woodward J."/>
            <person name="Norberczak H."/>
            <person name="Lord A."/>
            <person name="Arrowsmith C."/>
            <person name="Jagels K."/>
            <person name="Moule S."/>
            <person name="Mungall K."/>
            <person name="Saunders M."/>
            <person name="Whitehead S."/>
            <person name="Chabalgoity J.A."/>
            <person name="Maskell D."/>
            <person name="Humphreys T."/>
            <person name="Roberts M."/>
            <person name="Barrow P.A."/>
            <person name="Dougan G."/>
            <person name="Parkhill J."/>
        </authorList>
    </citation>
    <scope>NUCLEOTIDE SEQUENCE [LARGE SCALE GENOMIC DNA]</scope>
    <source>
        <strain>287/91 / NCTC 13346</strain>
    </source>
</reference>
<feature type="chain" id="PRO_1000136256" description="L-carnitine CoA-transferase">
    <location>
        <begin position="1"/>
        <end position="405"/>
    </location>
</feature>
<feature type="active site" description="Nucleophile" evidence="1">
    <location>
        <position position="169"/>
    </location>
</feature>
<feature type="binding site" evidence="1">
    <location>
        <position position="97"/>
    </location>
    <ligand>
        <name>CoA</name>
        <dbReference type="ChEBI" id="CHEBI:57287"/>
    </ligand>
</feature>
<feature type="binding site" evidence="1">
    <location>
        <position position="104"/>
    </location>
    <ligand>
        <name>CoA</name>
        <dbReference type="ChEBI" id="CHEBI:57287"/>
    </ligand>
</feature>
<protein>
    <recommendedName>
        <fullName evidence="1">L-carnitine CoA-transferase</fullName>
        <ecNumber evidence="1">2.8.3.21</ecNumber>
    </recommendedName>
    <alternativeName>
        <fullName evidence="1">Crotonobetainyl-CoA:carnitine CoA-transferase</fullName>
    </alternativeName>
</protein>
<name>CAIB_SALG2</name>
<keyword id="KW-0963">Cytoplasm</keyword>
<keyword id="KW-0808">Transferase</keyword>